<proteinExistence type="evidence at protein level"/>
<dbReference type="SMR" id="B3EWN0"/>
<dbReference type="ArachnoServer" id="AS001614">
    <property type="toxin name" value="beta-theraphotoxin-Pmr1a"/>
</dbReference>
<dbReference type="GO" id="GO:0005576">
    <property type="term" value="C:extracellular region"/>
    <property type="evidence" value="ECO:0007669"/>
    <property type="project" value="UniProtKB-SubCell"/>
</dbReference>
<dbReference type="GO" id="GO:0008200">
    <property type="term" value="F:ion channel inhibitor activity"/>
    <property type="evidence" value="ECO:0007669"/>
    <property type="project" value="InterPro"/>
</dbReference>
<dbReference type="GO" id="GO:0017080">
    <property type="term" value="F:sodium channel regulator activity"/>
    <property type="evidence" value="ECO:0007669"/>
    <property type="project" value="UniProtKB-KW"/>
</dbReference>
<dbReference type="GO" id="GO:0090729">
    <property type="term" value="F:toxin activity"/>
    <property type="evidence" value="ECO:0007669"/>
    <property type="project" value="UniProtKB-KW"/>
</dbReference>
<dbReference type="InterPro" id="IPR011696">
    <property type="entry name" value="Huwentoxin-1"/>
</dbReference>
<dbReference type="Pfam" id="PF07740">
    <property type="entry name" value="Toxin_12"/>
    <property type="match status" value="1"/>
</dbReference>
<dbReference type="SUPFAM" id="SSF57059">
    <property type="entry name" value="omega toxin-like"/>
    <property type="match status" value="1"/>
</dbReference>
<reference key="1">
    <citation type="submission" date="2012-05" db="UniProtKB">
        <title>Novel peptides isolated from spider venom, and uses thereof.</title>
        <authorList>
            <person name="Meir A."/>
            <person name="Cherki R.S."/>
            <person name="Kolb E."/>
            <person name="Langut Y."/>
            <person name="Bajayo N."/>
        </authorList>
    </citation>
    <scope>PROTEIN SEQUENCE</scope>
    <scope>FUNCTION</scope>
    <scope>MASS SPECTROMETRY</scope>
    <scope>AMIDATION AT LEU-34</scope>
    <source>
        <tissue>Venom</tissue>
    </source>
</reference>
<accession>B3EWN0</accession>
<feature type="chain" id="PRO_0000419137" description="Beta-theraphotoxin-Pmu1a">
    <location>
        <begin position="1"/>
        <end position="34"/>
    </location>
</feature>
<feature type="modified residue" description="Leucine amide" evidence="2">
    <location>
        <position position="34"/>
    </location>
</feature>
<feature type="disulfide bond" evidence="1">
    <location>
        <begin position="3"/>
        <end position="18"/>
    </location>
</feature>
<feature type="disulfide bond" evidence="1">
    <location>
        <begin position="10"/>
        <end position="23"/>
    </location>
</feature>
<feature type="disulfide bond" evidence="1">
    <location>
        <begin position="17"/>
        <end position="30"/>
    </location>
</feature>
<keyword id="KW-0027">Amidation</keyword>
<keyword id="KW-0903">Direct protein sequencing</keyword>
<keyword id="KW-1015">Disulfide bond</keyword>
<keyword id="KW-0872">Ion channel impairing toxin</keyword>
<keyword id="KW-0960">Knottin</keyword>
<keyword id="KW-0528">Neurotoxin</keyword>
<keyword id="KW-0964">Secreted</keyword>
<keyword id="KW-0800">Toxin</keyword>
<keyword id="KW-0738">Voltage-gated sodium channel impairing toxin</keyword>
<protein>
    <recommendedName>
        <fullName evidence="4">Beta-theraphotoxin-Pmu1a</fullName>
        <shortName evidence="4">Beta-TRTX-Pmu1a</shortName>
    </recommendedName>
    <alternativeName>
        <fullName evidence="3">Beta-theraphotoxin-Pm1a</fullName>
        <shortName evidence="3">Beta-TRTX-Pm1a</shortName>
    </alternativeName>
    <alternativeName>
        <fullName evidence="3">Pterinotoxin-1</fullName>
    </alternativeName>
</protein>
<evidence type="ECO:0000250" key="1">
    <source>
        <dbReference type="UniProtKB" id="D2Y1X6"/>
    </source>
</evidence>
<evidence type="ECO:0000269" key="2">
    <source ref="1"/>
</evidence>
<evidence type="ECO:0000303" key="3">
    <source ref="1"/>
</evidence>
<evidence type="ECO:0000305" key="4"/>
<comment type="function">
    <text evidence="2">Spider venom neurotoxin that blocks voltage-gated sodium channels Nav1.3/SCN3A and Nav1.8/SCN10A in human (IC(50)=2 uM and IC(50)=4 uM, respectively) and rat (IC(50)=2 uM and IC(50)=2.5 uM, respectively).</text>
</comment>
<comment type="subcellular location">
    <subcellularLocation>
        <location evidence="2">Secreted</location>
    </subcellularLocation>
</comment>
<comment type="tissue specificity">
    <text evidence="4">Expressed by the venom gland.</text>
</comment>
<comment type="domain">
    <text evidence="1">The presence of a 'disulfide through disulfide knot' structurally defines this protein as a knottin.</text>
</comment>
<comment type="mass spectrometry" mass="3966.7" method="MALDI" evidence="2"/>
<comment type="miscellaneous">
    <text>Negative results: has no effect on voltage-gated potassium channel human Kv11.1/KCNH2/ERG at 17 uM (Ref.1).</text>
</comment>
<comment type="similarity">
    <text evidence="4">Belongs to the neurotoxin 10 (Hwtx-1) family. 34 (Jztx-26) subfamily.</text>
</comment>
<sequence length="34" mass="3977">DDCLGMFSSCDPDNDKCCEGRKCNRKDKWCKYVL</sequence>
<organism>
    <name type="scientific">Pterinochilus murinus</name>
    <name type="common">Mombasa golden starburst baboon spider</name>
    <dbReference type="NCBI Taxonomy" id="1184495"/>
    <lineage>
        <taxon>Eukaryota</taxon>
        <taxon>Metazoa</taxon>
        <taxon>Ecdysozoa</taxon>
        <taxon>Arthropoda</taxon>
        <taxon>Chelicerata</taxon>
        <taxon>Arachnida</taxon>
        <taxon>Araneae</taxon>
        <taxon>Mygalomorphae</taxon>
        <taxon>Theraphosidae</taxon>
        <taxon>Pterinochilus</taxon>
    </lineage>
</organism>
<name>TXB1A_PTEMU</name>